<accession>A7ZV87</accession>
<protein>
    <recommendedName>
        <fullName evidence="1">Iron-sulfur cluster repair protein YtfE</fullName>
    </recommendedName>
</protein>
<proteinExistence type="inferred from homology"/>
<reference key="1">
    <citation type="journal article" date="2008" name="J. Bacteriol.">
        <title>The pangenome structure of Escherichia coli: comparative genomic analysis of E. coli commensal and pathogenic isolates.</title>
        <authorList>
            <person name="Rasko D.A."/>
            <person name="Rosovitz M.J."/>
            <person name="Myers G.S.A."/>
            <person name="Mongodin E.F."/>
            <person name="Fricke W.F."/>
            <person name="Gajer P."/>
            <person name="Crabtree J."/>
            <person name="Sebaihia M."/>
            <person name="Thomson N.R."/>
            <person name="Chaudhuri R."/>
            <person name="Henderson I.R."/>
            <person name="Sperandio V."/>
            <person name="Ravel J."/>
        </authorList>
    </citation>
    <scope>NUCLEOTIDE SEQUENCE [LARGE SCALE GENOMIC DNA]</scope>
    <source>
        <strain>E24377A / ETEC</strain>
    </source>
</reference>
<name>YTFE_ECO24</name>
<dbReference type="EMBL" id="CP000800">
    <property type="protein sequence ID" value="ABV21086.1"/>
    <property type="molecule type" value="Genomic_DNA"/>
</dbReference>
<dbReference type="RefSeq" id="WP_000331456.1">
    <property type="nucleotide sequence ID" value="NC_009801.1"/>
</dbReference>
<dbReference type="SMR" id="A7ZV87"/>
<dbReference type="GeneID" id="93777612"/>
<dbReference type="KEGG" id="ecw:EcE24377A_4777"/>
<dbReference type="HOGENOM" id="CLU_076075_2_0_6"/>
<dbReference type="Proteomes" id="UP000001122">
    <property type="component" value="Chromosome"/>
</dbReference>
<dbReference type="GO" id="GO:0005737">
    <property type="term" value="C:cytoplasm"/>
    <property type="evidence" value="ECO:0007669"/>
    <property type="project" value="UniProtKB-SubCell"/>
</dbReference>
<dbReference type="GO" id="GO:0046872">
    <property type="term" value="F:metal ion binding"/>
    <property type="evidence" value="ECO:0007669"/>
    <property type="project" value="UniProtKB-KW"/>
</dbReference>
<dbReference type="GO" id="GO:0030091">
    <property type="term" value="P:protein repair"/>
    <property type="evidence" value="ECO:0007669"/>
    <property type="project" value="UniProtKB-UniRule"/>
</dbReference>
<dbReference type="GO" id="GO:0051409">
    <property type="term" value="P:response to nitrosative stress"/>
    <property type="evidence" value="ECO:0007669"/>
    <property type="project" value="UniProtKB-UniRule"/>
</dbReference>
<dbReference type="GO" id="GO:0006979">
    <property type="term" value="P:response to oxidative stress"/>
    <property type="evidence" value="ECO:0007669"/>
    <property type="project" value="UniProtKB-UniRule"/>
</dbReference>
<dbReference type="CDD" id="cd12108">
    <property type="entry name" value="Hr-like"/>
    <property type="match status" value="1"/>
</dbReference>
<dbReference type="FunFam" id="1.20.120.520:FF:000001">
    <property type="entry name" value="Iron-sulfur cluster repair protein YtfE"/>
    <property type="match status" value="1"/>
</dbReference>
<dbReference type="Gene3D" id="1.20.120.520">
    <property type="entry name" value="nmb1532 protein domain like"/>
    <property type="match status" value="1"/>
</dbReference>
<dbReference type="HAMAP" id="MF_01606">
    <property type="entry name" value="RIC_YtfE"/>
    <property type="match status" value="1"/>
</dbReference>
<dbReference type="InterPro" id="IPR023742">
    <property type="entry name" value="FeS-repair_YftE"/>
</dbReference>
<dbReference type="InterPro" id="IPR012312">
    <property type="entry name" value="Hemerythrin-like"/>
</dbReference>
<dbReference type="InterPro" id="IPR019903">
    <property type="entry name" value="RIC_family"/>
</dbReference>
<dbReference type="NCBIfam" id="TIGR03652">
    <property type="entry name" value="FeS_repair_RIC"/>
    <property type="match status" value="1"/>
</dbReference>
<dbReference type="NCBIfam" id="NF008221">
    <property type="entry name" value="PRK10992.1"/>
    <property type="match status" value="1"/>
</dbReference>
<dbReference type="PANTHER" id="PTHR36438">
    <property type="entry name" value="IRON-SULFUR CLUSTER REPAIR PROTEIN YTFE"/>
    <property type="match status" value="1"/>
</dbReference>
<dbReference type="PANTHER" id="PTHR36438:SF1">
    <property type="entry name" value="IRON-SULFUR CLUSTER REPAIR PROTEIN YTFE"/>
    <property type="match status" value="1"/>
</dbReference>
<dbReference type="Pfam" id="PF01814">
    <property type="entry name" value="Hemerythrin"/>
    <property type="match status" value="1"/>
</dbReference>
<dbReference type="Pfam" id="PF04405">
    <property type="entry name" value="ScdA_N"/>
    <property type="match status" value="1"/>
</dbReference>
<gene>
    <name evidence="1" type="primary">ytfE</name>
    <name type="ordered locus">EcE24377A_4777</name>
</gene>
<organism>
    <name type="scientific">Escherichia coli O139:H28 (strain E24377A / ETEC)</name>
    <dbReference type="NCBI Taxonomy" id="331111"/>
    <lineage>
        <taxon>Bacteria</taxon>
        <taxon>Pseudomonadati</taxon>
        <taxon>Pseudomonadota</taxon>
        <taxon>Gammaproteobacteria</taxon>
        <taxon>Enterobacterales</taxon>
        <taxon>Enterobacteriaceae</taxon>
        <taxon>Escherichia</taxon>
    </lineage>
</organism>
<feature type="chain" id="PRO_1000069416" description="Iron-sulfur cluster repair protein YtfE">
    <location>
        <begin position="1"/>
        <end position="220"/>
    </location>
</feature>
<evidence type="ECO:0000255" key="1">
    <source>
        <dbReference type="HAMAP-Rule" id="MF_01606"/>
    </source>
</evidence>
<keyword id="KW-0963">Cytoplasm</keyword>
<keyword id="KW-0408">Iron</keyword>
<keyword id="KW-0479">Metal-binding</keyword>
<keyword id="KW-1185">Reference proteome</keyword>
<keyword id="KW-0346">Stress response</keyword>
<sequence>MAYRDQPLGELALSIPRASALFRKYDMDYCCGGKQTLARAAARKELDVEVIEAELAKLAEQPIEKDWRSAPLAEIIDHIIVRYHDRHREQLPELILQATKVERVHADKPSVPKGLTKYLTMLHEELSSHMMKEEQILFPMIKQGMGSQAMGPISVMESEHDEAGELLEVIKHTTNNVTPPPEACTTWKAMYNGINELIDDLMDHISLENNVLFPRALAGE</sequence>
<comment type="function">
    <text evidence="1">Di-iron-containing protein involved in the repair of iron-sulfur clusters damaged by oxidative and nitrosative stress conditions.</text>
</comment>
<comment type="subunit">
    <text evidence="1">Homodimer.</text>
</comment>
<comment type="subcellular location">
    <subcellularLocation>
        <location evidence="1">Cytoplasm</location>
    </subcellularLocation>
</comment>
<comment type="similarity">
    <text evidence="1">Belongs to the RIC family. YtfE subfamily.</text>
</comment>